<comment type="function">
    <text evidence="1">F(1)F(0) ATP synthase produces ATP from ADP in the presence of a proton or sodium gradient. F-type ATPases consist of two structural domains, F(1) containing the extramembraneous catalytic core and F(0) containing the membrane proton channel, linked together by a central stalk and a peripheral stalk. During catalysis, ATP synthesis in the catalytic domain of F(1) is coupled via a rotary mechanism of the central stalk subunits to proton translocation.</text>
</comment>
<comment type="function">
    <text evidence="1">Component of the F(0) channel, it forms part of the peripheral stalk, linking F(1) to F(0).</text>
</comment>
<comment type="subunit">
    <text evidence="1">F-type ATPases have 2 components, F(1) - the catalytic core - and F(0) - the membrane proton channel. F(1) has five subunits: alpha(3), beta(3), gamma(1), delta(1), epsilon(1). F(0) has four main subunits: a(1), b(1), b'(1) and c(10-14). The alpha and beta chains form an alternating ring which encloses part of the gamma chain. F(1) is attached to F(0) by a central stalk formed by the gamma and epsilon chains, while a peripheral stalk is formed by the delta, b and b' chains.</text>
</comment>
<comment type="subcellular location">
    <subcellularLocation>
        <location evidence="1">Plastid</location>
        <location evidence="1">Chloroplast thylakoid membrane</location>
        <topology evidence="1">Single-pass membrane protein</topology>
    </subcellularLocation>
</comment>
<comment type="miscellaneous">
    <text>In plastids the F-type ATPase is also known as CF(1)CF(0).</text>
</comment>
<comment type="similarity">
    <text evidence="1">Belongs to the ATPase B chain family.</text>
</comment>
<name>ATPF_PHYPA</name>
<keyword id="KW-0066">ATP synthesis</keyword>
<keyword id="KW-0138">CF(0)</keyword>
<keyword id="KW-0150">Chloroplast</keyword>
<keyword id="KW-0375">Hydrogen ion transport</keyword>
<keyword id="KW-0406">Ion transport</keyword>
<keyword id="KW-0472">Membrane</keyword>
<keyword id="KW-0934">Plastid</keyword>
<keyword id="KW-1185">Reference proteome</keyword>
<keyword id="KW-0793">Thylakoid</keyword>
<keyword id="KW-0812">Transmembrane</keyword>
<keyword id="KW-1133">Transmembrane helix</keyword>
<keyword id="KW-0813">Transport</keyword>
<sequence length="184" mass="21035">MKNIINLVIFSGYWPIAGNFGLNTNLLETNLINLSVVVGLLVYFGKGVLNNLLSNRKQTILSTIKDAEERYNEATDKLNQARERLERAKVKADEIRVNGLSQIEREKKELINAADEDSKRLEDSKNATIRFEEQRAIEQVRQQVSRLALERALEALNKRLNSELHSRVIDYHIGLLRAMESTSD</sequence>
<feature type="chain" id="PRO_0000368970" description="ATP synthase subunit b, chloroplastic">
    <location>
        <begin position="1"/>
        <end position="184"/>
    </location>
</feature>
<feature type="transmembrane region" description="Helical" evidence="1">
    <location>
        <begin position="4"/>
        <end position="24"/>
    </location>
</feature>
<proteinExistence type="inferred from homology"/>
<gene>
    <name evidence="1" type="primary">atpF</name>
</gene>
<protein>
    <recommendedName>
        <fullName evidence="1">ATP synthase subunit b, chloroplastic</fullName>
    </recommendedName>
    <alternativeName>
        <fullName evidence="1">ATP synthase F(0) sector subunit b</fullName>
    </alternativeName>
    <alternativeName>
        <fullName evidence="1">ATPase subunit I</fullName>
    </alternativeName>
</protein>
<dbReference type="EMBL" id="AP005672">
    <property type="protein sequence ID" value="BAC85067.1"/>
    <property type="molecule type" value="Genomic_DNA"/>
</dbReference>
<dbReference type="RefSeq" id="NP_904217.1">
    <property type="nucleotide sequence ID" value="NC_005087.2"/>
</dbReference>
<dbReference type="RefSeq" id="YP_009477547.1">
    <property type="nucleotide sequence ID" value="NC_037465.1"/>
</dbReference>
<dbReference type="SMR" id="Q6YXK2"/>
<dbReference type="FunCoup" id="Q6YXK2">
    <property type="interactions" value="353"/>
</dbReference>
<dbReference type="STRING" id="3218.Q6YXK2"/>
<dbReference type="GeneID" id="2546752"/>
<dbReference type="GeneID" id="36487181"/>
<dbReference type="KEGG" id="ppp:2546752"/>
<dbReference type="InParanoid" id="Q6YXK2"/>
<dbReference type="OrthoDB" id="1924782at2759"/>
<dbReference type="Proteomes" id="UP000006727">
    <property type="component" value="Chloroplast"/>
</dbReference>
<dbReference type="GO" id="GO:0009535">
    <property type="term" value="C:chloroplast thylakoid membrane"/>
    <property type="evidence" value="ECO:0007669"/>
    <property type="project" value="UniProtKB-SubCell"/>
</dbReference>
<dbReference type="GO" id="GO:0045259">
    <property type="term" value="C:proton-transporting ATP synthase complex"/>
    <property type="evidence" value="ECO:0007669"/>
    <property type="project" value="UniProtKB-KW"/>
</dbReference>
<dbReference type="GO" id="GO:0046933">
    <property type="term" value="F:proton-transporting ATP synthase activity, rotational mechanism"/>
    <property type="evidence" value="ECO:0007669"/>
    <property type="project" value="UniProtKB-UniRule"/>
</dbReference>
<dbReference type="CDD" id="cd06503">
    <property type="entry name" value="ATP-synt_Fo_b"/>
    <property type="match status" value="1"/>
</dbReference>
<dbReference type="HAMAP" id="MF_01398">
    <property type="entry name" value="ATP_synth_b_bprime"/>
    <property type="match status" value="1"/>
</dbReference>
<dbReference type="InterPro" id="IPR002146">
    <property type="entry name" value="ATP_synth_b/b'su_bac/chlpt"/>
</dbReference>
<dbReference type="NCBIfam" id="NF005606">
    <property type="entry name" value="PRK07352.1"/>
    <property type="match status" value="1"/>
</dbReference>
<dbReference type="PANTHER" id="PTHR34264">
    <property type="entry name" value="ATP SYNTHASE SUBUNIT B, CHLOROPLASTIC"/>
    <property type="match status" value="1"/>
</dbReference>
<dbReference type="PANTHER" id="PTHR34264:SF3">
    <property type="entry name" value="ATP SYNTHASE SUBUNIT B, CHLOROPLASTIC"/>
    <property type="match status" value="1"/>
</dbReference>
<dbReference type="Pfam" id="PF00430">
    <property type="entry name" value="ATP-synt_B"/>
    <property type="match status" value="1"/>
</dbReference>
<geneLocation type="chloroplast"/>
<reference key="1">
    <citation type="journal article" date="2003" name="Nucleic Acids Res.">
        <title>Complete chloroplast DNA sequence of the moss Physcomitrella patens: evidence for the loss and relocation of rpoA from the chloroplast to the nucleus.</title>
        <authorList>
            <person name="Sugiura C."/>
            <person name="Kobayashi Y."/>
            <person name="Setsuyuki A."/>
            <person name="Sugita C."/>
            <person name="Sugita M."/>
        </authorList>
    </citation>
    <scope>NUCLEOTIDE SEQUENCE [LARGE SCALE GENOMIC DNA]</scope>
    <source>
        <strain>cv. Gransden 2004</strain>
    </source>
</reference>
<accession>Q6YXK2</accession>
<evidence type="ECO:0000255" key="1">
    <source>
        <dbReference type="HAMAP-Rule" id="MF_01398"/>
    </source>
</evidence>
<organism>
    <name type="scientific">Physcomitrium patens</name>
    <name type="common">Spreading-leaved earth moss</name>
    <name type="synonym">Physcomitrella patens</name>
    <dbReference type="NCBI Taxonomy" id="3218"/>
    <lineage>
        <taxon>Eukaryota</taxon>
        <taxon>Viridiplantae</taxon>
        <taxon>Streptophyta</taxon>
        <taxon>Embryophyta</taxon>
        <taxon>Bryophyta</taxon>
        <taxon>Bryophytina</taxon>
        <taxon>Bryopsida</taxon>
        <taxon>Funariidae</taxon>
        <taxon>Funariales</taxon>
        <taxon>Funariaceae</taxon>
        <taxon>Physcomitrium</taxon>
    </lineage>
</organism>